<feature type="chain" id="PRO_1000198868" description="Arginine--tRNA ligase">
    <location>
        <begin position="1"/>
        <end position="566"/>
    </location>
</feature>
<feature type="short sequence motif" description="'HIGH' region">
    <location>
        <begin position="123"/>
        <end position="133"/>
    </location>
</feature>
<dbReference type="EC" id="6.1.1.19" evidence="1"/>
<dbReference type="EMBL" id="CP000724">
    <property type="protein sequence ID" value="ABR47890.1"/>
    <property type="molecule type" value="Genomic_DNA"/>
</dbReference>
<dbReference type="RefSeq" id="WP_012062928.1">
    <property type="nucleotide sequence ID" value="NC_009633.1"/>
</dbReference>
<dbReference type="SMR" id="A6TNX2"/>
<dbReference type="STRING" id="293826.Amet_1714"/>
<dbReference type="KEGG" id="amt:Amet_1714"/>
<dbReference type="eggNOG" id="COG0018">
    <property type="taxonomic scope" value="Bacteria"/>
</dbReference>
<dbReference type="HOGENOM" id="CLU_006406_6_1_9"/>
<dbReference type="OrthoDB" id="9805987at2"/>
<dbReference type="Proteomes" id="UP000001572">
    <property type="component" value="Chromosome"/>
</dbReference>
<dbReference type="GO" id="GO:0005737">
    <property type="term" value="C:cytoplasm"/>
    <property type="evidence" value="ECO:0007669"/>
    <property type="project" value="UniProtKB-SubCell"/>
</dbReference>
<dbReference type="GO" id="GO:0004814">
    <property type="term" value="F:arginine-tRNA ligase activity"/>
    <property type="evidence" value="ECO:0007669"/>
    <property type="project" value="UniProtKB-UniRule"/>
</dbReference>
<dbReference type="GO" id="GO:0005524">
    <property type="term" value="F:ATP binding"/>
    <property type="evidence" value="ECO:0007669"/>
    <property type="project" value="UniProtKB-UniRule"/>
</dbReference>
<dbReference type="GO" id="GO:0006420">
    <property type="term" value="P:arginyl-tRNA aminoacylation"/>
    <property type="evidence" value="ECO:0007669"/>
    <property type="project" value="UniProtKB-UniRule"/>
</dbReference>
<dbReference type="CDD" id="cd07956">
    <property type="entry name" value="Anticodon_Ia_Arg"/>
    <property type="match status" value="1"/>
</dbReference>
<dbReference type="CDD" id="cd00671">
    <property type="entry name" value="ArgRS_core"/>
    <property type="match status" value="1"/>
</dbReference>
<dbReference type="FunFam" id="3.40.50.620:FF:000116">
    <property type="entry name" value="Arginine--tRNA ligase"/>
    <property type="match status" value="1"/>
</dbReference>
<dbReference type="FunFam" id="1.10.730.10:FF:000006">
    <property type="entry name" value="Arginyl-tRNA synthetase 2, mitochondrial"/>
    <property type="match status" value="1"/>
</dbReference>
<dbReference type="Gene3D" id="3.30.1360.70">
    <property type="entry name" value="Arginyl tRNA synthetase N-terminal domain"/>
    <property type="match status" value="1"/>
</dbReference>
<dbReference type="Gene3D" id="3.40.50.620">
    <property type="entry name" value="HUPs"/>
    <property type="match status" value="1"/>
</dbReference>
<dbReference type="Gene3D" id="1.10.730.10">
    <property type="entry name" value="Isoleucyl-tRNA Synthetase, Domain 1"/>
    <property type="match status" value="1"/>
</dbReference>
<dbReference type="HAMAP" id="MF_00123">
    <property type="entry name" value="Arg_tRNA_synth"/>
    <property type="match status" value="1"/>
</dbReference>
<dbReference type="InterPro" id="IPR001412">
    <property type="entry name" value="aa-tRNA-synth_I_CS"/>
</dbReference>
<dbReference type="InterPro" id="IPR001278">
    <property type="entry name" value="Arg-tRNA-ligase"/>
</dbReference>
<dbReference type="InterPro" id="IPR005148">
    <property type="entry name" value="Arg-tRNA-synth_N"/>
</dbReference>
<dbReference type="InterPro" id="IPR036695">
    <property type="entry name" value="Arg-tRNA-synth_N_sf"/>
</dbReference>
<dbReference type="InterPro" id="IPR035684">
    <property type="entry name" value="ArgRS_core"/>
</dbReference>
<dbReference type="InterPro" id="IPR008909">
    <property type="entry name" value="DALR_anticod-bd"/>
</dbReference>
<dbReference type="InterPro" id="IPR014729">
    <property type="entry name" value="Rossmann-like_a/b/a_fold"/>
</dbReference>
<dbReference type="InterPro" id="IPR009080">
    <property type="entry name" value="tRNAsynth_Ia_anticodon-bd"/>
</dbReference>
<dbReference type="NCBIfam" id="TIGR00456">
    <property type="entry name" value="argS"/>
    <property type="match status" value="1"/>
</dbReference>
<dbReference type="PANTHER" id="PTHR11956:SF5">
    <property type="entry name" value="ARGININE--TRNA LIGASE, CYTOPLASMIC"/>
    <property type="match status" value="1"/>
</dbReference>
<dbReference type="PANTHER" id="PTHR11956">
    <property type="entry name" value="ARGINYL-TRNA SYNTHETASE"/>
    <property type="match status" value="1"/>
</dbReference>
<dbReference type="Pfam" id="PF03485">
    <property type="entry name" value="Arg_tRNA_synt_N"/>
    <property type="match status" value="1"/>
</dbReference>
<dbReference type="Pfam" id="PF05746">
    <property type="entry name" value="DALR_1"/>
    <property type="match status" value="1"/>
</dbReference>
<dbReference type="Pfam" id="PF00750">
    <property type="entry name" value="tRNA-synt_1d"/>
    <property type="match status" value="1"/>
</dbReference>
<dbReference type="PRINTS" id="PR01038">
    <property type="entry name" value="TRNASYNTHARG"/>
</dbReference>
<dbReference type="SMART" id="SM01016">
    <property type="entry name" value="Arg_tRNA_synt_N"/>
    <property type="match status" value="1"/>
</dbReference>
<dbReference type="SMART" id="SM00836">
    <property type="entry name" value="DALR_1"/>
    <property type="match status" value="1"/>
</dbReference>
<dbReference type="SUPFAM" id="SSF47323">
    <property type="entry name" value="Anticodon-binding domain of a subclass of class I aminoacyl-tRNA synthetases"/>
    <property type="match status" value="1"/>
</dbReference>
<dbReference type="SUPFAM" id="SSF55190">
    <property type="entry name" value="Arginyl-tRNA synthetase (ArgRS), N-terminal 'additional' domain"/>
    <property type="match status" value="1"/>
</dbReference>
<dbReference type="SUPFAM" id="SSF52374">
    <property type="entry name" value="Nucleotidylyl transferase"/>
    <property type="match status" value="1"/>
</dbReference>
<dbReference type="PROSITE" id="PS00178">
    <property type="entry name" value="AA_TRNA_LIGASE_I"/>
    <property type="match status" value="1"/>
</dbReference>
<name>SYR_ALKMQ</name>
<sequence length="566" mass="64448">MSDFKQKVSELLGTQIEGIGQRELLEMIEVPPNSEMGDFAFPCFRLAKTFRKAPQVIAEELVAKIQLTDDFEKVDNTGGYLNFFVNRNTYAKAVIQEVLSKGDQYGSRNLGEGKNICIDYSAPNVAKPFHVGHLRSTVIGNSLYRIYDFLGYNCIGINHLGDWGTQFGKVIVAYKNWGDKAEIEKEPINTLLALYVKFHDEAEKNPDLEDEARGWFTKMEKGDEEALSLWKWFSSETIKELKKIYALLDVHFDHYSGESFYNDKMDVVIDELNKQNLLKESQGANIVDLEEYNMPPCLVQKKDGSTLYATRDIAAAIYRKNTFNFEKCLYVTDYSQNLHFAQWFKVIELMGYDWAKDIEHISFGRVTHEGRRIQSRKGSVVLLEEVLNGAVERISEIIEEKNPNVENKEQVAKDVGIGAIVFNDLSNNRIKDISFSWDTAFSFEGETGPYVQYTHARASSVLRKAEVAITDHINAAHLTDDVTMNVIKTIEQFPQVIVDAQRKNEPSIITRHIVNIAQAFNRFYHDHPILVEDEELKMARLAVVQAVKQVLSVGLSLIGIKAPEKM</sequence>
<comment type="catalytic activity">
    <reaction evidence="1">
        <text>tRNA(Arg) + L-arginine + ATP = L-arginyl-tRNA(Arg) + AMP + diphosphate</text>
        <dbReference type="Rhea" id="RHEA:20301"/>
        <dbReference type="Rhea" id="RHEA-COMP:9658"/>
        <dbReference type="Rhea" id="RHEA-COMP:9673"/>
        <dbReference type="ChEBI" id="CHEBI:30616"/>
        <dbReference type="ChEBI" id="CHEBI:32682"/>
        <dbReference type="ChEBI" id="CHEBI:33019"/>
        <dbReference type="ChEBI" id="CHEBI:78442"/>
        <dbReference type="ChEBI" id="CHEBI:78513"/>
        <dbReference type="ChEBI" id="CHEBI:456215"/>
        <dbReference type="EC" id="6.1.1.19"/>
    </reaction>
</comment>
<comment type="subunit">
    <text evidence="1">Monomer.</text>
</comment>
<comment type="subcellular location">
    <subcellularLocation>
        <location evidence="1">Cytoplasm</location>
    </subcellularLocation>
</comment>
<comment type="similarity">
    <text evidence="1">Belongs to the class-I aminoacyl-tRNA synthetase family.</text>
</comment>
<accession>A6TNX2</accession>
<keyword id="KW-0030">Aminoacyl-tRNA synthetase</keyword>
<keyword id="KW-0067">ATP-binding</keyword>
<keyword id="KW-0963">Cytoplasm</keyword>
<keyword id="KW-0436">Ligase</keyword>
<keyword id="KW-0547">Nucleotide-binding</keyword>
<keyword id="KW-0648">Protein biosynthesis</keyword>
<keyword id="KW-1185">Reference proteome</keyword>
<evidence type="ECO:0000255" key="1">
    <source>
        <dbReference type="HAMAP-Rule" id="MF_00123"/>
    </source>
</evidence>
<gene>
    <name evidence="1" type="primary">argS</name>
    <name type="ordered locus">Amet_1714</name>
</gene>
<proteinExistence type="inferred from homology"/>
<organism>
    <name type="scientific">Alkaliphilus metalliredigens (strain QYMF)</name>
    <dbReference type="NCBI Taxonomy" id="293826"/>
    <lineage>
        <taxon>Bacteria</taxon>
        <taxon>Bacillati</taxon>
        <taxon>Bacillota</taxon>
        <taxon>Clostridia</taxon>
        <taxon>Peptostreptococcales</taxon>
        <taxon>Natronincolaceae</taxon>
        <taxon>Alkaliphilus</taxon>
    </lineage>
</organism>
<protein>
    <recommendedName>
        <fullName evidence="1">Arginine--tRNA ligase</fullName>
        <ecNumber evidence="1">6.1.1.19</ecNumber>
    </recommendedName>
    <alternativeName>
        <fullName evidence="1">Arginyl-tRNA synthetase</fullName>
        <shortName evidence="1">ArgRS</shortName>
    </alternativeName>
</protein>
<reference key="1">
    <citation type="journal article" date="2016" name="Genome Announc.">
        <title>Complete genome sequence of Alkaliphilus metalliredigens strain QYMF, an alkaliphilic and metal-reducing bacterium isolated from borax-contaminated leachate ponds.</title>
        <authorList>
            <person name="Hwang C."/>
            <person name="Copeland A."/>
            <person name="Lucas S."/>
            <person name="Lapidus A."/>
            <person name="Barry K."/>
            <person name="Detter J.C."/>
            <person name="Glavina Del Rio T."/>
            <person name="Hammon N."/>
            <person name="Israni S."/>
            <person name="Dalin E."/>
            <person name="Tice H."/>
            <person name="Pitluck S."/>
            <person name="Chertkov O."/>
            <person name="Brettin T."/>
            <person name="Bruce D."/>
            <person name="Han C."/>
            <person name="Schmutz J."/>
            <person name="Larimer F."/>
            <person name="Land M.L."/>
            <person name="Hauser L."/>
            <person name="Kyrpides N."/>
            <person name="Mikhailova N."/>
            <person name="Ye Q."/>
            <person name="Zhou J."/>
            <person name="Richardson P."/>
            <person name="Fields M.W."/>
        </authorList>
    </citation>
    <scope>NUCLEOTIDE SEQUENCE [LARGE SCALE GENOMIC DNA]</scope>
    <source>
        <strain>QYMF</strain>
    </source>
</reference>